<comment type="function">
    <text evidence="1">Catalyzes the phosphorylation of the position 2 hydroxy group of 4-diphosphocytidyl-2C-methyl-D-erythritol.</text>
</comment>
<comment type="catalytic activity">
    <reaction evidence="1">
        <text>4-CDP-2-C-methyl-D-erythritol + ATP = 4-CDP-2-C-methyl-D-erythritol 2-phosphate + ADP + H(+)</text>
        <dbReference type="Rhea" id="RHEA:18437"/>
        <dbReference type="ChEBI" id="CHEBI:15378"/>
        <dbReference type="ChEBI" id="CHEBI:30616"/>
        <dbReference type="ChEBI" id="CHEBI:57823"/>
        <dbReference type="ChEBI" id="CHEBI:57919"/>
        <dbReference type="ChEBI" id="CHEBI:456216"/>
        <dbReference type="EC" id="2.7.1.148"/>
    </reaction>
</comment>
<comment type="pathway">
    <text evidence="1">Isoprenoid biosynthesis; isopentenyl diphosphate biosynthesis via DXP pathway; isopentenyl diphosphate from 1-deoxy-D-xylulose 5-phosphate: step 3/6.</text>
</comment>
<comment type="similarity">
    <text evidence="1">Belongs to the GHMP kinase family. IspE subfamily.</text>
</comment>
<proteinExistence type="inferred from homology"/>
<organism>
    <name type="scientific">Clostridium botulinum (strain Eklund 17B / Type B)</name>
    <dbReference type="NCBI Taxonomy" id="935198"/>
    <lineage>
        <taxon>Bacteria</taxon>
        <taxon>Bacillati</taxon>
        <taxon>Bacillota</taxon>
        <taxon>Clostridia</taxon>
        <taxon>Eubacteriales</taxon>
        <taxon>Clostridiaceae</taxon>
        <taxon>Clostridium</taxon>
    </lineage>
</organism>
<evidence type="ECO:0000255" key="1">
    <source>
        <dbReference type="HAMAP-Rule" id="MF_00061"/>
    </source>
</evidence>
<reference key="1">
    <citation type="submission" date="2008-04" db="EMBL/GenBank/DDBJ databases">
        <title>Complete sequence of Clostridium botulinum strain Eklund.</title>
        <authorList>
            <person name="Brinkac L.M."/>
            <person name="Brown J.L."/>
            <person name="Bruce D."/>
            <person name="Detter C."/>
            <person name="Munk C."/>
            <person name="Smith L.A."/>
            <person name="Smith T.J."/>
            <person name="Sutton G."/>
            <person name="Brettin T.S."/>
        </authorList>
    </citation>
    <scope>NUCLEOTIDE SEQUENCE [LARGE SCALE GENOMIC DNA]</scope>
    <source>
        <strain>Eklund 17B / Type B</strain>
    </source>
</reference>
<name>ISPE_CLOBB</name>
<sequence>MNIKAYAKINISLDVIGKREDGYHLLKMIMQNIDLYDIVQVEKIPNGIKLKCNKPYVPTDERNLAYKAAKLFKETYDIKSGIYINIEKNIPVSAGLAGGSTDAAAVLKIMNKMFNINVPQSELMDLGLKLGADVPYCICGGTALCEGIGEKVTKLKPFTDKILVVVKPPFGVSTKEVYKAFDLSKVIFHPKTNELISNIEKNNIDFIANNMKNLLENVTLGRYKIISTIKEEINTCGALGSMMSGSGPTVFGFFDDILKAQKCYEKMKEKYVDVFITRTI</sequence>
<keyword id="KW-0067">ATP-binding</keyword>
<keyword id="KW-0414">Isoprene biosynthesis</keyword>
<keyword id="KW-0418">Kinase</keyword>
<keyword id="KW-0547">Nucleotide-binding</keyword>
<keyword id="KW-0808">Transferase</keyword>
<accession>B2TJM0</accession>
<gene>
    <name evidence="1" type="primary">ispE</name>
    <name type="ordered locus">CLL_A0471</name>
</gene>
<protein>
    <recommendedName>
        <fullName evidence="1">4-diphosphocytidyl-2-C-methyl-D-erythritol kinase</fullName>
        <shortName evidence="1">CMK</shortName>
        <ecNumber evidence="1">2.7.1.148</ecNumber>
    </recommendedName>
    <alternativeName>
        <fullName evidence="1">4-(cytidine-5'-diphospho)-2-C-methyl-D-erythritol kinase</fullName>
    </alternativeName>
</protein>
<dbReference type="EC" id="2.7.1.148" evidence="1"/>
<dbReference type="EMBL" id="CP001056">
    <property type="protein sequence ID" value="ACD25087.1"/>
    <property type="molecule type" value="Genomic_DNA"/>
</dbReference>
<dbReference type="SMR" id="B2TJM0"/>
<dbReference type="KEGG" id="cbk:CLL_A0471"/>
<dbReference type="PATRIC" id="fig|935198.13.peg.426"/>
<dbReference type="HOGENOM" id="CLU_053057_1_1_9"/>
<dbReference type="UniPathway" id="UPA00056">
    <property type="reaction ID" value="UER00094"/>
</dbReference>
<dbReference type="Proteomes" id="UP000001195">
    <property type="component" value="Chromosome"/>
</dbReference>
<dbReference type="GO" id="GO:0050515">
    <property type="term" value="F:4-(cytidine 5'-diphospho)-2-C-methyl-D-erythritol kinase activity"/>
    <property type="evidence" value="ECO:0007669"/>
    <property type="project" value="UniProtKB-UniRule"/>
</dbReference>
<dbReference type="GO" id="GO:0005524">
    <property type="term" value="F:ATP binding"/>
    <property type="evidence" value="ECO:0007669"/>
    <property type="project" value="UniProtKB-UniRule"/>
</dbReference>
<dbReference type="GO" id="GO:0019288">
    <property type="term" value="P:isopentenyl diphosphate biosynthetic process, methylerythritol 4-phosphate pathway"/>
    <property type="evidence" value="ECO:0007669"/>
    <property type="project" value="UniProtKB-UniRule"/>
</dbReference>
<dbReference type="GO" id="GO:0016114">
    <property type="term" value="P:terpenoid biosynthetic process"/>
    <property type="evidence" value="ECO:0007669"/>
    <property type="project" value="InterPro"/>
</dbReference>
<dbReference type="FunFam" id="3.30.230.10:FF:000029">
    <property type="entry name" value="4-diphosphocytidyl-2-C-methyl-D-erythritol kinase"/>
    <property type="match status" value="1"/>
</dbReference>
<dbReference type="Gene3D" id="3.30.230.10">
    <property type="match status" value="1"/>
</dbReference>
<dbReference type="Gene3D" id="3.30.70.890">
    <property type="entry name" value="GHMP kinase, C-terminal domain"/>
    <property type="match status" value="1"/>
</dbReference>
<dbReference type="HAMAP" id="MF_00061">
    <property type="entry name" value="IspE"/>
    <property type="match status" value="1"/>
</dbReference>
<dbReference type="InterPro" id="IPR013750">
    <property type="entry name" value="GHMP_kinase_C_dom"/>
</dbReference>
<dbReference type="InterPro" id="IPR036554">
    <property type="entry name" value="GHMP_kinase_C_sf"/>
</dbReference>
<dbReference type="InterPro" id="IPR006204">
    <property type="entry name" value="GHMP_kinase_N_dom"/>
</dbReference>
<dbReference type="InterPro" id="IPR004424">
    <property type="entry name" value="IspE"/>
</dbReference>
<dbReference type="InterPro" id="IPR020568">
    <property type="entry name" value="Ribosomal_Su5_D2-typ_SF"/>
</dbReference>
<dbReference type="InterPro" id="IPR014721">
    <property type="entry name" value="Ribsml_uS5_D2-typ_fold_subgr"/>
</dbReference>
<dbReference type="NCBIfam" id="TIGR00154">
    <property type="entry name" value="ispE"/>
    <property type="match status" value="1"/>
</dbReference>
<dbReference type="PANTHER" id="PTHR43527">
    <property type="entry name" value="4-DIPHOSPHOCYTIDYL-2-C-METHYL-D-ERYTHRITOL KINASE, CHLOROPLASTIC"/>
    <property type="match status" value="1"/>
</dbReference>
<dbReference type="PANTHER" id="PTHR43527:SF2">
    <property type="entry name" value="4-DIPHOSPHOCYTIDYL-2-C-METHYL-D-ERYTHRITOL KINASE, CHLOROPLASTIC"/>
    <property type="match status" value="1"/>
</dbReference>
<dbReference type="Pfam" id="PF08544">
    <property type="entry name" value="GHMP_kinases_C"/>
    <property type="match status" value="1"/>
</dbReference>
<dbReference type="Pfam" id="PF00288">
    <property type="entry name" value="GHMP_kinases_N"/>
    <property type="match status" value="1"/>
</dbReference>
<dbReference type="PIRSF" id="PIRSF010376">
    <property type="entry name" value="IspE"/>
    <property type="match status" value="1"/>
</dbReference>
<dbReference type="SUPFAM" id="SSF55060">
    <property type="entry name" value="GHMP Kinase, C-terminal domain"/>
    <property type="match status" value="1"/>
</dbReference>
<dbReference type="SUPFAM" id="SSF54211">
    <property type="entry name" value="Ribosomal protein S5 domain 2-like"/>
    <property type="match status" value="1"/>
</dbReference>
<feature type="chain" id="PRO_1000092077" description="4-diphosphocytidyl-2-C-methyl-D-erythritol kinase">
    <location>
        <begin position="1"/>
        <end position="280"/>
    </location>
</feature>
<feature type="active site" evidence="1">
    <location>
        <position position="8"/>
    </location>
</feature>
<feature type="active site" evidence="1">
    <location>
        <position position="133"/>
    </location>
</feature>
<feature type="binding site" evidence="1">
    <location>
        <begin position="91"/>
        <end position="101"/>
    </location>
    <ligand>
        <name>ATP</name>
        <dbReference type="ChEBI" id="CHEBI:30616"/>
    </ligand>
</feature>